<feature type="signal peptide" evidence="1">
    <location>
        <begin position="1"/>
        <end position="39"/>
    </location>
</feature>
<feature type="chain" id="PRO_5000125426" description="Catalase-peroxidase">
    <location>
        <begin position="40"/>
        <end position="753"/>
    </location>
</feature>
<feature type="active site" description="Proton acceptor" evidence="1">
    <location>
        <position position="119"/>
    </location>
</feature>
<feature type="binding site" description="axial binding residue" evidence="1">
    <location>
        <position position="282"/>
    </location>
    <ligand>
        <name>heme b</name>
        <dbReference type="ChEBI" id="CHEBI:60344"/>
    </ligand>
    <ligandPart>
        <name>Fe</name>
        <dbReference type="ChEBI" id="CHEBI:18248"/>
    </ligandPart>
</feature>
<feature type="site" description="Transition state stabilizer" evidence="1">
    <location>
        <position position="115"/>
    </location>
</feature>
<feature type="cross-link" description="Tryptophyl-tyrosyl-methioninium (Trp-Tyr) (with M-267)" evidence="1">
    <location>
        <begin position="118"/>
        <end position="241"/>
    </location>
</feature>
<feature type="cross-link" description="Tryptophyl-tyrosyl-methioninium (Tyr-Met) (with W-118)" evidence="1">
    <location>
        <begin position="241"/>
        <end position="267"/>
    </location>
</feature>
<dbReference type="EC" id="1.11.1.21" evidence="1"/>
<dbReference type="EMBL" id="CP000388">
    <property type="protein sequence ID" value="ABG40493.1"/>
    <property type="molecule type" value="Genomic_DNA"/>
</dbReference>
<dbReference type="RefSeq" id="WP_011574788.1">
    <property type="nucleotide sequence ID" value="NC_008228.1"/>
</dbReference>
<dbReference type="SMR" id="Q15UE5"/>
<dbReference type="STRING" id="342610.Patl_1975"/>
<dbReference type="PeroxiBase" id="2647">
    <property type="entry name" value="PatCP01"/>
</dbReference>
<dbReference type="KEGG" id="pat:Patl_1975"/>
<dbReference type="eggNOG" id="COG0376">
    <property type="taxonomic scope" value="Bacteria"/>
</dbReference>
<dbReference type="HOGENOM" id="CLU_025424_2_0_6"/>
<dbReference type="OrthoDB" id="9759743at2"/>
<dbReference type="Proteomes" id="UP000001981">
    <property type="component" value="Chromosome"/>
</dbReference>
<dbReference type="GO" id="GO:0005829">
    <property type="term" value="C:cytosol"/>
    <property type="evidence" value="ECO:0007669"/>
    <property type="project" value="TreeGrafter"/>
</dbReference>
<dbReference type="GO" id="GO:0004096">
    <property type="term" value="F:catalase activity"/>
    <property type="evidence" value="ECO:0007669"/>
    <property type="project" value="UniProtKB-UniRule"/>
</dbReference>
<dbReference type="GO" id="GO:0020037">
    <property type="term" value="F:heme binding"/>
    <property type="evidence" value="ECO:0007669"/>
    <property type="project" value="InterPro"/>
</dbReference>
<dbReference type="GO" id="GO:0046872">
    <property type="term" value="F:metal ion binding"/>
    <property type="evidence" value="ECO:0007669"/>
    <property type="project" value="UniProtKB-KW"/>
</dbReference>
<dbReference type="GO" id="GO:0070301">
    <property type="term" value="P:cellular response to hydrogen peroxide"/>
    <property type="evidence" value="ECO:0007669"/>
    <property type="project" value="TreeGrafter"/>
</dbReference>
<dbReference type="GO" id="GO:0042744">
    <property type="term" value="P:hydrogen peroxide catabolic process"/>
    <property type="evidence" value="ECO:0007669"/>
    <property type="project" value="UniProtKB-KW"/>
</dbReference>
<dbReference type="CDD" id="cd00649">
    <property type="entry name" value="catalase_peroxidase_1"/>
    <property type="match status" value="1"/>
</dbReference>
<dbReference type="CDD" id="cd08200">
    <property type="entry name" value="catalase_peroxidase_2"/>
    <property type="match status" value="1"/>
</dbReference>
<dbReference type="FunFam" id="1.10.420.10:FF:000002">
    <property type="entry name" value="Catalase-peroxidase"/>
    <property type="match status" value="1"/>
</dbReference>
<dbReference type="FunFam" id="1.10.420.10:FF:000004">
    <property type="entry name" value="Catalase-peroxidase"/>
    <property type="match status" value="1"/>
</dbReference>
<dbReference type="FunFam" id="1.10.520.10:FF:000002">
    <property type="entry name" value="Catalase-peroxidase"/>
    <property type="match status" value="1"/>
</dbReference>
<dbReference type="Gene3D" id="1.10.520.10">
    <property type="match status" value="2"/>
</dbReference>
<dbReference type="Gene3D" id="1.10.420.10">
    <property type="entry name" value="Peroxidase, domain 2"/>
    <property type="match status" value="2"/>
</dbReference>
<dbReference type="HAMAP" id="MF_01961">
    <property type="entry name" value="Catal_peroxid"/>
    <property type="match status" value="1"/>
</dbReference>
<dbReference type="InterPro" id="IPR000763">
    <property type="entry name" value="Catalase_peroxidase"/>
</dbReference>
<dbReference type="InterPro" id="IPR002016">
    <property type="entry name" value="Haem_peroxidase"/>
</dbReference>
<dbReference type="InterPro" id="IPR010255">
    <property type="entry name" value="Haem_peroxidase_sf"/>
</dbReference>
<dbReference type="InterPro" id="IPR019793">
    <property type="entry name" value="Peroxidases_heam-ligand_BS"/>
</dbReference>
<dbReference type="NCBIfam" id="TIGR00198">
    <property type="entry name" value="cat_per_HPI"/>
    <property type="match status" value="1"/>
</dbReference>
<dbReference type="NCBIfam" id="NF011635">
    <property type="entry name" value="PRK15061.1"/>
    <property type="match status" value="1"/>
</dbReference>
<dbReference type="PANTHER" id="PTHR30555:SF0">
    <property type="entry name" value="CATALASE-PEROXIDASE"/>
    <property type="match status" value="1"/>
</dbReference>
<dbReference type="PANTHER" id="PTHR30555">
    <property type="entry name" value="HYDROPEROXIDASE I, BIFUNCTIONAL CATALASE-PEROXIDASE"/>
    <property type="match status" value="1"/>
</dbReference>
<dbReference type="Pfam" id="PF00141">
    <property type="entry name" value="peroxidase"/>
    <property type="match status" value="2"/>
</dbReference>
<dbReference type="PRINTS" id="PR00460">
    <property type="entry name" value="BPEROXIDASE"/>
</dbReference>
<dbReference type="PRINTS" id="PR00458">
    <property type="entry name" value="PEROXIDASE"/>
</dbReference>
<dbReference type="SUPFAM" id="SSF48113">
    <property type="entry name" value="Heme-dependent peroxidases"/>
    <property type="match status" value="2"/>
</dbReference>
<dbReference type="PROSITE" id="PS00435">
    <property type="entry name" value="PEROXIDASE_1"/>
    <property type="match status" value="1"/>
</dbReference>
<dbReference type="PROSITE" id="PS50873">
    <property type="entry name" value="PEROXIDASE_4"/>
    <property type="match status" value="1"/>
</dbReference>
<sequence length="753" mass="83419">MLPRVNKRSNCIAKKTSNRLISAVSLAIASLCISQSALADGMPKTNTFWWPEQLNLQPLRQNDAKSNPLGGDFNYADAFKTLNLANVKSDIKALLTSSQDWWPADYGHYGPFFVRMAWHSTGTYRMSDGRGGGAGGQQRFEPLNSWPDNVSLDKARRLLWPIKQKYGRSLSWADLMVLTGNVAMESMGFTIYGFAGGREDDFEPDLVYWGPEKKWLGGNERYSGERKLEEPLAAVQMGLIYVNPEGPNGNHDPISAAADIRDVFARMAMNDEETVALIAGGHTFGKAHGAHKPDECLDPAPAGATIEEQGLGWKNKCGKGNAEDTITSGLEGAWSVSPTQWTMQYLDNLFGFEWVETQSPAGATQWIPKDNAGANLVPDAHVKSKRHAPIMFTTDLALKEDPQYRKIAERFHANPKEFELAFSKAWFKLTHRDMGPRARYVGDESPTDDFLWQDPIPSVDYSLIDKRDIQHLKTKLLDGDVTPAQLVKTAWAAAASFRATDMRGGVNGARIQLAPQKNWEVNNPDELNTVLMFLNKVKKDFNDGQSGNKQVSLADLIVLGGAAAIEHAASKNDFDVEVPFIPGRSDATQAQTEVESFAVLEPKADGFRNYYAQGNTLSPVEMLVDKANTLDLSVPEMSVLVAGLRVMNINADGSDRGVLTDNPGTLNNDFFVNLLDMSTRWEKAKDQQDLYLGIDRKSNKQRWSASSVDLIFGSNSELRAVAEVYASDDAHQQFVDDFVNAWTKVMTLDRFDL</sequence>
<organism>
    <name type="scientific">Pseudoalteromonas atlantica (strain T6c / ATCC BAA-1087)</name>
    <dbReference type="NCBI Taxonomy" id="3042615"/>
    <lineage>
        <taxon>Bacteria</taxon>
        <taxon>Pseudomonadati</taxon>
        <taxon>Pseudomonadota</taxon>
        <taxon>Gammaproteobacteria</taxon>
        <taxon>Alteromonadales</taxon>
        <taxon>Alteromonadaceae</taxon>
        <taxon>Paraglaciecola</taxon>
    </lineage>
</organism>
<name>KATG_PSEA6</name>
<accession>Q15UE5</accession>
<keyword id="KW-0349">Heme</keyword>
<keyword id="KW-0376">Hydrogen peroxide</keyword>
<keyword id="KW-0408">Iron</keyword>
<keyword id="KW-0479">Metal-binding</keyword>
<keyword id="KW-0560">Oxidoreductase</keyword>
<keyword id="KW-0575">Peroxidase</keyword>
<keyword id="KW-0732">Signal</keyword>
<comment type="function">
    <text evidence="1">Bifunctional enzyme with both catalase and broad-spectrum peroxidase activity.</text>
</comment>
<comment type="catalytic activity">
    <reaction evidence="1">
        <text>H2O2 + AH2 = A + 2 H2O</text>
        <dbReference type="Rhea" id="RHEA:30275"/>
        <dbReference type="ChEBI" id="CHEBI:13193"/>
        <dbReference type="ChEBI" id="CHEBI:15377"/>
        <dbReference type="ChEBI" id="CHEBI:16240"/>
        <dbReference type="ChEBI" id="CHEBI:17499"/>
        <dbReference type="EC" id="1.11.1.21"/>
    </reaction>
</comment>
<comment type="catalytic activity">
    <reaction evidence="1">
        <text>2 H2O2 = O2 + 2 H2O</text>
        <dbReference type="Rhea" id="RHEA:20309"/>
        <dbReference type="ChEBI" id="CHEBI:15377"/>
        <dbReference type="ChEBI" id="CHEBI:15379"/>
        <dbReference type="ChEBI" id="CHEBI:16240"/>
        <dbReference type="EC" id="1.11.1.21"/>
    </reaction>
</comment>
<comment type="cofactor">
    <cofactor evidence="1">
        <name>heme b</name>
        <dbReference type="ChEBI" id="CHEBI:60344"/>
    </cofactor>
    <text evidence="1">Binds 1 heme b (iron(II)-protoporphyrin IX) group per dimer.</text>
</comment>
<comment type="subunit">
    <text evidence="1">Homodimer or homotetramer.</text>
</comment>
<comment type="PTM">
    <text evidence="1">Formation of the three residue Trp-Tyr-Met cross-link is important for the catalase, but not the peroxidase activity of the enzyme.</text>
</comment>
<comment type="similarity">
    <text evidence="1">Belongs to the peroxidase family. Peroxidase/catalase subfamily.</text>
</comment>
<evidence type="ECO:0000255" key="1">
    <source>
        <dbReference type="HAMAP-Rule" id="MF_01961"/>
    </source>
</evidence>
<gene>
    <name evidence="1" type="primary">katG</name>
    <name type="ordered locus">Patl_1975</name>
</gene>
<proteinExistence type="inferred from homology"/>
<protein>
    <recommendedName>
        <fullName evidence="1">Catalase-peroxidase</fullName>
        <shortName evidence="1">CP</shortName>
        <ecNumber evidence="1">1.11.1.21</ecNumber>
    </recommendedName>
    <alternativeName>
        <fullName evidence="1">Peroxidase/catalase</fullName>
    </alternativeName>
</protein>
<reference key="1">
    <citation type="submission" date="2006-06" db="EMBL/GenBank/DDBJ databases">
        <title>Complete sequence of Pseudoalteromonas atlantica T6c.</title>
        <authorList>
            <consortium name="US DOE Joint Genome Institute"/>
            <person name="Copeland A."/>
            <person name="Lucas S."/>
            <person name="Lapidus A."/>
            <person name="Barry K."/>
            <person name="Detter J.C."/>
            <person name="Glavina del Rio T."/>
            <person name="Hammon N."/>
            <person name="Israni S."/>
            <person name="Dalin E."/>
            <person name="Tice H."/>
            <person name="Pitluck S."/>
            <person name="Saunders E."/>
            <person name="Brettin T."/>
            <person name="Bruce D."/>
            <person name="Han C."/>
            <person name="Tapia R."/>
            <person name="Gilna P."/>
            <person name="Schmutz J."/>
            <person name="Larimer F."/>
            <person name="Land M."/>
            <person name="Hauser L."/>
            <person name="Kyrpides N."/>
            <person name="Kim E."/>
            <person name="Karls A.C."/>
            <person name="Bartlett D."/>
            <person name="Higgins B.P."/>
            <person name="Richardson P."/>
        </authorList>
    </citation>
    <scope>NUCLEOTIDE SEQUENCE [LARGE SCALE GENOMIC DNA]</scope>
    <source>
        <strain>T6c / ATCC BAA-1087</strain>
    </source>
</reference>